<reference key="1">
    <citation type="submission" date="2006-10" db="EMBL/GenBank/DDBJ databases">
        <title>Complete sequence of chromosome of Pelobacter propionicus DSM 2379.</title>
        <authorList>
            <consortium name="US DOE Joint Genome Institute"/>
            <person name="Copeland A."/>
            <person name="Lucas S."/>
            <person name="Lapidus A."/>
            <person name="Barry K."/>
            <person name="Detter J.C."/>
            <person name="Glavina del Rio T."/>
            <person name="Hammon N."/>
            <person name="Israni S."/>
            <person name="Dalin E."/>
            <person name="Tice H."/>
            <person name="Pitluck S."/>
            <person name="Saunders E."/>
            <person name="Brettin T."/>
            <person name="Bruce D."/>
            <person name="Han C."/>
            <person name="Tapia R."/>
            <person name="Schmutz J."/>
            <person name="Larimer F."/>
            <person name="Land M."/>
            <person name="Hauser L."/>
            <person name="Kyrpides N."/>
            <person name="Kim E."/>
            <person name="Lovley D."/>
            <person name="Richardson P."/>
        </authorList>
    </citation>
    <scope>NUCLEOTIDE SEQUENCE [LARGE SCALE GENOMIC DNA]</scope>
    <source>
        <strain>DSM 2379 / NBRC 103807 / OttBd1</strain>
    </source>
</reference>
<evidence type="ECO:0000255" key="1">
    <source>
        <dbReference type="HAMAP-Rule" id="MF_00296"/>
    </source>
</evidence>
<gene>
    <name evidence="1" type="primary">metXA</name>
    <name type="ordered locus">Ppro_3500</name>
</gene>
<dbReference type="EC" id="2.3.1.31" evidence="1"/>
<dbReference type="EMBL" id="CP000482">
    <property type="protein sequence ID" value="ABL01093.1"/>
    <property type="molecule type" value="Genomic_DNA"/>
</dbReference>
<dbReference type="RefSeq" id="WP_011737308.1">
    <property type="nucleotide sequence ID" value="NC_008609.1"/>
</dbReference>
<dbReference type="SMR" id="A1AUS2"/>
<dbReference type="STRING" id="338966.Ppro_3500"/>
<dbReference type="ESTHER" id="pelpd-metx">
    <property type="family name" value="Homoserine_transacetylase"/>
</dbReference>
<dbReference type="KEGG" id="ppd:Ppro_3500"/>
<dbReference type="eggNOG" id="COG2021">
    <property type="taxonomic scope" value="Bacteria"/>
</dbReference>
<dbReference type="HOGENOM" id="CLU_028760_1_2_7"/>
<dbReference type="OrthoDB" id="9800754at2"/>
<dbReference type="UniPathway" id="UPA00051">
    <property type="reaction ID" value="UER00074"/>
</dbReference>
<dbReference type="Proteomes" id="UP000006732">
    <property type="component" value="Chromosome"/>
</dbReference>
<dbReference type="GO" id="GO:0005737">
    <property type="term" value="C:cytoplasm"/>
    <property type="evidence" value="ECO:0007669"/>
    <property type="project" value="UniProtKB-SubCell"/>
</dbReference>
<dbReference type="GO" id="GO:0004414">
    <property type="term" value="F:homoserine O-acetyltransferase activity"/>
    <property type="evidence" value="ECO:0007669"/>
    <property type="project" value="UniProtKB-UniRule"/>
</dbReference>
<dbReference type="GO" id="GO:0009092">
    <property type="term" value="P:homoserine metabolic process"/>
    <property type="evidence" value="ECO:0007669"/>
    <property type="project" value="TreeGrafter"/>
</dbReference>
<dbReference type="GO" id="GO:0009086">
    <property type="term" value="P:methionine biosynthetic process"/>
    <property type="evidence" value="ECO:0007669"/>
    <property type="project" value="UniProtKB-UniRule"/>
</dbReference>
<dbReference type="FunFam" id="1.10.1740.110:FF:000001">
    <property type="entry name" value="Homoserine O-acetyltransferase"/>
    <property type="match status" value="1"/>
</dbReference>
<dbReference type="Gene3D" id="1.10.1740.110">
    <property type="match status" value="1"/>
</dbReference>
<dbReference type="Gene3D" id="3.40.50.1820">
    <property type="entry name" value="alpha/beta hydrolase"/>
    <property type="match status" value="1"/>
</dbReference>
<dbReference type="HAMAP" id="MF_00296">
    <property type="entry name" value="MetX_acyltransf"/>
    <property type="match status" value="1"/>
</dbReference>
<dbReference type="InterPro" id="IPR000073">
    <property type="entry name" value="AB_hydrolase_1"/>
</dbReference>
<dbReference type="InterPro" id="IPR029058">
    <property type="entry name" value="AB_hydrolase_fold"/>
</dbReference>
<dbReference type="InterPro" id="IPR008220">
    <property type="entry name" value="HAT_MetX-like"/>
</dbReference>
<dbReference type="NCBIfam" id="TIGR01392">
    <property type="entry name" value="homoserO_Ac_trn"/>
    <property type="match status" value="1"/>
</dbReference>
<dbReference type="NCBIfam" id="NF001209">
    <property type="entry name" value="PRK00175.1"/>
    <property type="match status" value="1"/>
</dbReference>
<dbReference type="PANTHER" id="PTHR32268">
    <property type="entry name" value="HOMOSERINE O-ACETYLTRANSFERASE"/>
    <property type="match status" value="1"/>
</dbReference>
<dbReference type="PANTHER" id="PTHR32268:SF11">
    <property type="entry name" value="HOMOSERINE O-ACETYLTRANSFERASE"/>
    <property type="match status" value="1"/>
</dbReference>
<dbReference type="Pfam" id="PF00561">
    <property type="entry name" value="Abhydrolase_1"/>
    <property type="match status" value="1"/>
</dbReference>
<dbReference type="PIRSF" id="PIRSF000443">
    <property type="entry name" value="Homoser_Ac_trans"/>
    <property type="match status" value="1"/>
</dbReference>
<dbReference type="SUPFAM" id="SSF53474">
    <property type="entry name" value="alpha/beta-Hydrolases"/>
    <property type="match status" value="1"/>
</dbReference>
<keyword id="KW-0012">Acyltransferase</keyword>
<keyword id="KW-0028">Amino-acid biosynthesis</keyword>
<keyword id="KW-0963">Cytoplasm</keyword>
<keyword id="KW-0486">Methionine biosynthesis</keyword>
<keyword id="KW-1185">Reference proteome</keyword>
<keyword id="KW-0808">Transferase</keyword>
<proteinExistence type="inferred from homology"/>
<name>METXA_PELPD</name>
<comment type="function">
    <text evidence="1">Transfers an acetyl group from acetyl-CoA to L-homoserine, forming acetyl-L-homoserine.</text>
</comment>
<comment type="catalytic activity">
    <reaction evidence="1">
        <text>L-homoserine + acetyl-CoA = O-acetyl-L-homoserine + CoA</text>
        <dbReference type="Rhea" id="RHEA:13701"/>
        <dbReference type="ChEBI" id="CHEBI:57287"/>
        <dbReference type="ChEBI" id="CHEBI:57288"/>
        <dbReference type="ChEBI" id="CHEBI:57476"/>
        <dbReference type="ChEBI" id="CHEBI:57716"/>
        <dbReference type="EC" id="2.3.1.31"/>
    </reaction>
</comment>
<comment type="pathway">
    <text evidence="1">Amino-acid biosynthesis; L-methionine biosynthesis via de novo pathway; O-acetyl-L-homoserine from L-homoserine: step 1/1.</text>
</comment>
<comment type="subunit">
    <text evidence="1">Homodimer.</text>
</comment>
<comment type="subcellular location">
    <subcellularLocation>
        <location evidence="1">Cytoplasm</location>
    </subcellularLocation>
</comment>
<comment type="similarity">
    <text evidence="1">Belongs to the AB hydrolase superfamily. MetX family.</text>
</comment>
<organism>
    <name type="scientific">Pelobacter propionicus (strain DSM 2379 / NBRC 103807 / OttBd1)</name>
    <dbReference type="NCBI Taxonomy" id="338966"/>
    <lineage>
        <taxon>Bacteria</taxon>
        <taxon>Pseudomonadati</taxon>
        <taxon>Thermodesulfobacteriota</taxon>
        <taxon>Desulfuromonadia</taxon>
        <taxon>Desulfuromonadales</taxon>
        <taxon>Desulfuromonadaceae</taxon>
        <taxon>Pelobacter</taxon>
    </lineage>
</organism>
<feature type="chain" id="PRO_1000021892" description="Homoserine O-acetyltransferase">
    <location>
        <begin position="1"/>
        <end position="371"/>
    </location>
</feature>
<feature type="domain" description="AB hydrolase-1" evidence="1">
    <location>
        <begin position="44"/>
        <end position="350"/>
    </location>
</feature>
<feature type="active site" description="Nucleophile" evidence="1">
    <location>
        <position position="150"/>
    </location>
</feature>
<feature type="active site" evidence="1">
    <location>
        <position position="311"/>
    </location>
</feature>
<feature type="active site" evidence="1">
    <location>
        <position position="344"/>
    </location>
</feature>
<feature type="binding site" evidence="1">
    <location>
        <position position="217"/>
    </location>
    <ligand>
        <name>substrate</name>
    </ligand>
</feature>
<feature type="binding site" evidence="1">
    <location>
        <position position="345"/>
    </location>
    <ligand>
        <name>substrate</name>
    </ligand>
</feature>
<protein>
    <recommendedName>
        <fullName evidence="1">Homoserine O-acetyltransferase</fullName>
        <shortName evidence="1">HAT</shortName>
        <ecNumber evidence="1">2.3.1.31</ecNumber>
    </recommendedName>
    <alternativeName>
        <fullName evidence="1">Homoserine transacetylase</fullName>
        <shortName evidence="1">HTA</shortName>
    </alternativeName>
</protein>
<sequence length="371" mass="41259">MSVSIVREQSITISDGIRLDSGRILAPITIAYETYGTLNTDASNAILVEHAWTGSAHLAGKQSENDTKPGWWDAIVGPGRLLDTDRYFVICSNVIGSCFGSTGPASINPKTGKRYNLTFPVITIRDMVRAQKLLIEMLGIRRLLSVMGGSMGGMQTLEWITQYPDAIASAVLLATTPRPSPLAISMNAIARWSIFNDPTWRKGEYKNNPKDGLALARAIGHITFLSDESMQAKFGRKFSARDGQFDFFGQFEVERYLDYNGYSFVSRFDANSFLYLAKALDLYDVSWGYESMAEAFARVSAPLQFFAFSSDWLYPPGQTEEMVSCLRKLGKEVEYHLISSSYGHDAFLLEHEAFSPLVKRFLDAAYAKGGQ</sequence>
<accession>A1AUS2</accession>